<protein>
    <recommendedName>
        <fullName>14-3-3 protein beta/alpha</fullName>
    </recommendedName>
</protein>
<proteinExistence type="evidence at transcript level"/>
<gene>
    <name type="primary">YWHAB</name>
    <name type="ORF">RCJMB04_5d11</name>
</gene>
<keyword id="KW-0007">Acetylation</keyword>
<keyword id="KW-0963">Cytoplasm</keyword>
<keyword id="KW-0597">Phosphoprotein</keyword>
<keyword id="KW-1185">Reference proteome</keyword>
<evidence type="ECO:0000250" key="1"/>
<evidence type="ECO:0000305" key="2"/>
<organism>
    <name type="scientific">Gallus gallus</name>
    <name type="common">Chicken</name>
    <dbReference type="NCBI Taxonomy" id="9031"/>
    <lineage>
        <taxon>Eukaryota</taxon>
        <taxon>Metazoa</taxon>
        <taxon>Chordata</taxon>
        <taxon>Craniata</taxon>
        <taxon>Vertebrata</taxon>
        <taxon>Euteleostomi</taxon>
        <taxon>Archelosauria</taxon>
        <taxon>Archosauria</taxon>
        <taxon>Dinosauria</taxon>
        <taxon>Saurischia</taxon>
        <taxon>Theropoda</taxon>
        <taxon>Coelurosauria</taxon>
        <taxon>Aves</taxon>
        <taxon>Neognathae</taxon>
        <taxon>Galloanserae</taxon>
        <taxon>Galliformes</taxon>
        <taxon>Phasianidae</taxon>
        <taxon>Phasianinae</taxon>
        <taxon>Gallus</taxon>
    </lineage>
</organism>
<accession>Q5ZLQ6</accession>
<reference key="1">
    <citation type="journal article" date="2005" name="Genome Biol.">
        <title>Full-length cDNAs from chicken bursal lymphocytes to facilitate gene function analysis.</title>
        <authorList>
            <person name="Caldwell R.B."/>
            <person name="Kierzek A.M."/>
            <person name="Arakawa H."/>
            <person name="Bezzubov Y."/>
            <person name="Zaim J."/>
            <person name="Fiedler P."/>
            <person name="Kutter S."/>
            <person name="Blagodatski A."/>
            <person name="Kostovska D."/>
            <person name="Koter M."/>
            <person name="Plachy J."/>
            <person name="Carninci P."/>
            <person name="Hayashizaki Y."/>
            <person name="Buerstedde J.-M."/>
        </authorList>
    </citation>
    <scope>NUCLEOTIDE SEQUENCE [LARGE SCALE MRNA]</scope>
    <source>
        <strain>CB</strain>
        <tissue>Bursa of Fabricius</tissue>
    </source>
</reference>
<comment type="function">
    <text evidence="1">Adapter protein implicated in the regulation of a large spectrum of both general and specialized signaling pathways. Binds to a large number of partners, usually by recognition of a phosphoserine or phosphothreonine motif. Binding generally results in the modulation of the activity of the binding partner (By similarity).</text>
</comment>
<comment type="subunit">
    <text evidence="1">Homodimer, and heterodimer with other family members.</text>
</comment>
<comment type="subcellular location">
    <subcellularLocation>
        <location evidence="1">Cytoplasm</location>
    </subcellularLocation>
</comment>
<comment type="PTM">
    <text evidence="1">Phosphorylated.</text>
</comment>
<comment type="similarity">
    <text evidence="2">Belongs to the 14-3-3 family.</text>
</comment>
<name>1433B_CHICK</name>
<dbReference type="EMBL" id="AJ719678">
    <property type="protein sequence ID" value="CAG31337.1"/>
    <property type="molecule type" value="mRNA"/>
</dbReference>
<dbReference type="RefSeq" id="NP_001006289.1">
    <property type="nucleotide sequence ID" value="NM_001006289.2"/>
</dbReference>
<dbReference type="RefSeq" id="XP_040506608.1">
    <property type="nucleotide sequence ID" value="XM_040650674.2"/>
</dbReference>
<dbReference type="RefSeq" id="XP_046758785.1">
    <property type="nucleotide sequence ID" value="XM_046902829.1"/>
</dbReference>
<dbReference type="RefSeq" id="XP_046786618.1">
    <property type="nucleotide sequence ID" value="XM_046930662.1"/>
</dbReference>
<dbReference type="RefSeq" id="XP_046786619.1">
    <property type="nucleotide sequence ID" value="XM_046930663.1"/>
</dbReference>
<dbReference type="SMR" id="Q5ZLQ6"/>
<dbReference type="BioGRID" id="680338">
    <property type="interactions" value="2"/>
</dbReference>
<dbReference type="FunCoup" id="Q5ZLQ6">
    <property type="interactions" value="2723"/>
</dbReference>
<dbReference type="IntAct" id="Q5ZLQ6">
    <property type="interactions" value="1"/>
</dbReference>
<dbReference type="STRING" id="9031.ENSGALP00000043305"/>
<dbReference type="PaxDb" id="9031-ENSGALP00000043305"/>
<dbReference type="Ensembl" id="ENSGALT00010053687.1">
    <property type="protein sequence ID" value="ENSGALP00010032339.1"/>
    <property type="gene ID" value="ENSGALG00010022076.1"/>
</dbReference>
<dbReference type="GeneID" id="419190"/>
<dbReference type="KEGG" id="gga:419190"/>
<dbReference type="CTD" id="7529"/>
<dbReference type="VEuPathDB" id="HostDB:geneid_419190"/>
<dbReference type="eggNOG" id="KOG0841">
    <property type="taxonomic scope" value="Eukaryota"/>
</dbReference>
<dbReference type="GeneTree" id="ENSGT01090000260040"/>
<dbReference type="HOGENOM" id="CLU_058290_1_0_1"/>
<dbReference type="InParanoid" id="Q5ZLQ6"/>
<dbReference type="OMA" id="AECKVFY"/>
<dbReference type="OrthoDB" id="10260625at2759"/>
<dbReference type="PhylomeDB" id="Q5ZLQ6"/>
<dbReference type="TreeFam" id="TF102003"/>
<dbReference type="Reactome" id="R-GGA-165159">
    <property type="pathway name" value="MTOR signalling"/>
</dbReference>
<dbReference type="Reactome" id="R-GGA-166208">
    <property type="pathway name" value="mTORC1-mediated signalling"/>
</dbReference>
<dbReference type="Reactome" id="R-GGA-170968">
    <property type="pathway name" value="Frs2-mediated activation"/>
</dbReference>
<dbReference type="Reactome" id="R-GGA-2028269">
    <property type="pathway name" value="Signaling by Hippo"/>
</dbReference>
<dbReference type="Reactome" id="R-GGA-392517">
    <property type="pathway name" value="Rap1 signalling"/>
</dbReference>
<dbReference type="Reactome" id="R-GGA-450385">
    <property type="pathway name" value="Butyrate Response Factor 1 (BRF1) binds and destabilizes mRNA"/>
</dbReference>
<dbReference type="Reactome" id="R-GGA-5628897">
    <property type="pathway name" value="TP53 Regulates Metabolic Genes"/>
</dbReference>
<dbReference type="Reactome" id="R-GGA-5673000">
    <property type="pathway name" value="RAF activation"/>
</dbReference>
<dbReference type="Reactome" id="R-GGA-5674135">
    <property type="pathway name" value="MAP2K and MAPK activation"/>
</dbReference>
<dbReference type="Reactome" id="R-GGA-5675221">
    <property type="pathway name" value="Negative regulation of MAPK pathway"/>
</dbReference>
<dbReference type="Reactome" id="R-GGA-9614399">
    <property type="pathway name" value="Regulation of localization of FOXO transcription factors"/>
</dbReference>
<dbReference type="PRO" id="PR:Q5ZLQ6"/>
<dbReference type="Proteomes" id="UP000000539">
    <property type="component" value="Chromosome 20"/>
</dbReference>
<dbReference type="Bgee" id="ENSGALG00000004143">
    <property type="expression patterns" value="Expressed in brain and 14 other cell types or tissues"/>
</dbReference>
<dbReference type="GO" id="GO:0005737">
    <property type="term" value="C:cytoplasm"/>
    <property type="evidence" value="ECO:0000318"/>
    <property type="project" value="GO_Central"/>
</dbReference>
<dbReference type="GO" id="GO:0005829">
    <property type="term" value="C:cytosol"/>
    <property type="evidence" value="ECO:0007669"/>
    <property type="project" value="Ensembl"/>
</dbReference>
<dbReference type="GO" id="GO:0005634">
    <property type="term" value="C:nucleus"/>
    <property type="evidence" value="ECO:0007669"/>
    <property type="project" value="Ensembl"/>
</dbReference>
<dbReference type="GO" id="GO:0048471">
    <property type="term" value="C:perinuclear region of cytoplasm"/>
    <property type="evidence" value="ECO:0007669"/>
    <property type="project" value="Ensembl"/>
</dbReference>
<dbReference type="GO" id="GO:0042826">
    <property type="term" value="F:histone deacetylase binding"/>
    <property type="evidence" value="ECO:0007669"/>
    <property type="project" value="Ensembl"/>
</dbReference>
<dbReference type="GO" id="GO:0042802">
    <property type="term" value="F:identical protein binding"/>
    <property type="evidence" value="ECO:0007669"/>
    <property type="project" value="Ensembl"/>
</dbReference>
<dbReference type="GO" id="GO:0050815">
    <property type="term" value="F:phosphoserine residue binding"/>
    <property type="evidence" value="ECO:0007669"/>
    <property type="project" value="Ensembl"/>
</dbReference>
<dbReference type="GO" id="GO:0019904">
    <property type="term" value="F:protein domain specific binding"/>
    <property type="evidence" value="ECO:0007669"/>
    <property type="project" value="Ensembl"/>
</dbReference>
<dbReference type="GO" id="GO:0004860">
    <property type="term" value="F:protein kinase inhibitor activity"/>
    <property type="evidence" value="ECO:0007669"/>
    <property type="project" value="Ensembl"/>
</dbReference>
<dbReference type="GO" id="GO:0004864">
    <property type="term" value="F:protein phosphatase inhibitor activity"/>
    <property type="evidence" value="ECO:0007669"/>
    <property type="project" value="Ensembl"/>
</dbReference>
<dbReference type="GO" id="GO:0140311">
    <property type="term" value="F:protein sequestering activity"/>
    <property type="evidence" value="ECO:0007669"/>
    <property type="project" value="Ensembl"/>
</dbReference>
<dbReference type="GO" id="GO:0045744">
    <property type="term" value="P:negative regulation of G protein-coupled receptor signaling pathway"/>
    <property type="evidence" value="ECO:0007669"/>
    <property type="project" value="Ensembl"/>
</dbReference>
<dbReference type="GO" id="GO:0042308">
    <property type="term" value="P:negative regulation of protein import into nucleus"/>
    <property type="evidence" value="ECO:0007669"/>
    <property type="project" value="Ensembl"/>
</dbReference>
<dbReference type="GO" id="GO:0045944">
    <property type="term" value="P:positive regulation of transcription by RNA polymerase II"/>
    <property type="evidence" value="ECO:0007669"/>
    <property type="project" value="Ensembl"/>
</dbReference>
<dbReference type="GO" id="GO:0008104">
    <property type="term" value="P:protein localization"/>
    <property type="evidence" value="ECO:0000318"/>
    <property type="project" value="GO_Central"/>
</dbReference>
<dbReference type="GO" id="GO:0006605">
    <property type="term" value="P:protein targeting"/>
    <property type="evidence" value="ECO:0007669"/>
    <property type="project" value="Ensembl"/>
</dbReference>
<dbReference type="GO" id="GO:0007165">
    <property type="term" value="P:signal transduction"/>
    <property type="evidence" value="ECO:0000318"/>
    <property type="project" value="GO_Central"/>
</dbReference>
<dbReference type="CDD" id="cd10022">
    <property type="entry name" value="14-3-3_beta_zeta"/>
    <property type="match status" value="1"/>
</dbReference>
<dbReference type="FunFam" id="1.20.190.20:FF:000001">
    <property type="entry name" value="14-3-3 gamma 1"/>
    <property type="match status" value="1"/>
</dbReference>
<dbReference type="Gene3D" id="1.20.190.20">
    <property type="entry name" value="14-3-3 domain"/>
    <property type="match status" value="1"/>
</dbReference>
<dbReference type="InterPro" id="IPR000308">
    <property type="entry name" value="14-3-3"/>
</dbReference>
<dbReference type="InterPro" id="IPR023409">
    <property type="entry name" value="14-3-3_CS"/>
</dbReference>
<dbReference type="InterPro" id="IPR036815">
    <property type="entry name" value="14-3-3_dom_sf"/>
</dbReference>
<dbReference type="InterPro" id="IPR023410">
    <property type="entry name" value="14-3-3_domain"/>
</dbReference>
<dbReference type="PANTHER" id="PTHR18860">
    <property type="entry name" value="14-3-3 PROTEIN"/>
    <property type="match status" value="1"/>
</dbReference>
<dbReference type="Pfam" id="PF00244">
    <property type="entry name" value="14-3-3"/>
    <property type="match status" value="1"/>
</dbReference>
<dbReference type="PIRSF" id="PIRSF000868">
    <property type="entry name" value="14-3-3"/>
    <property type="match status" value="1"/>
</dbReference>
<dbReference type="PRINTS" id="PR00305">
    <property type="entry name" value="1433ZETA"/>
</dbReference>
<dbReference type="SMART" id="SM00101">
    <property type="entry name" value="14_3_3"/>
    <property type="match status" value="1"/>
</dbReference>
<dbReference type="SUPFAM" id="SSF48445">
    <property type="entry name" value="14-3-3 protein"/>
    <property type="match status" value="1"/>
</dbReference>
<dbReference type="PROSITE" id="PS00796">
    <property type="entry name" value="1433_1"/>
    <property type="match status" value="1"/>
</dbReference>
<dbReference type="PROSITE" id="PS00797">
    <property type="entry name" value="1433_2"/>
    <property type="match status" value="1"/>
</dbReference>
<sequence length="244" mass="27907">MDKSELVQKAKLAEQAERYDDMAAAMKAVTEQGHELSNEERNLLSVAYKNVVGARRSSWRVISSIEQKTERNEKKQQMGREYREKIEAELQDICNDVLELLDKYLIVNATQPESKVFYLKMKGDYYRYLSEVASGDNKQTTVANSQQAYQEAFEISKKEMQPTHPIRLGLALNFSVFYYEILNSPEKACNLAKTAFDEAIAELDTLNEESYKDSTLIMQLLRDNLTLWTSENQGDEGDAGEGEN</sequence>
<feature type="chain" id="PRO_0000058597" description="14-3-3 protein beta/alpha">
    <location>
        <begin position="1"/>
        <end position="244"/>
    </location>
</feature>
<feature type="site" description="Interaction with phosphoserine on interacting protein" evidence="1">
    <location>
        <position position="56"/>
    </location>
</feature>
<feature type="site" description="Interaction with phosphoserine on interacting protein" evidence="1">
    <location>
        <position position="127"/>
    </location>
</feature>
<feature type="modified residue" description="N-acetylmethionine" evidence="1">
    <location>
        <position position="1"/>
    </location>
</feature>
<feature type="modified residue" description="Phosphoserine" evidence="1">
    <location>
        <position position="184"/>
    </location>
</feature>